<feature type="chain" id="PRO_1000066852" description="UPF0229 protein CPF_1540">
    <location>
        <begin position="1"/>
        <end position="392"/>
    </location>
</feature>
<feature type="region of interest" description="Disordered" evidence="2">
    <location>
        <begin position="75"/>
        <end position="100"/>
    </location>
</feature>
<feature type="compositionally biased region" description="Basic and acidic residues" evidence="2">
    <location>
        <begin position="80"/>
        <end position="94"/>
    </location>
</feature>
<sequence length="392" mass="45768">MAIFRDQAENHVEHDRSIEDRRRHRQLVEKSIKENLGDILSEESIIGETKNKKYKIPIRGIKEYQFIYGANNKGVTTGTGEERRGDRISSDKRKAISNNKAGNQEGKDIYETEITLEELMDYIVEDLDLPNLDRKKYSEIIVESAAKKRGYQKYGVRPRLAKKKTVMCKIARKQGKKRALREIGEEAEIGRFPFREDDLRYYKVKKHPKKESNAVMIFIMDVSGSMDNTKKYLARSFFFVLSRFIRRKYNNVAFEFISHTTTAKNVNEYEFFHKGESGGTYISSGINAAIDLIKEKYNPGVWNIYPFYASDGDNWSEDNEKAMEAVNEISDLSNMFGYIELLPSTYSTTMFYRFKKEISKKNFVSVTVKEKKDLWNAIKYMLSEELQEKNKE</sequence>
<name>Y1540_CLOP1</name>
<protein>
    <recommendedName>
        <fullName evidence="1">UPF0229 protein CPF_1540</fullName>
    </recommendedName>
</protein>
<organism>
    <name type="scientific">Clostridium perfringens (strain ATCC 13124 / DSM 756 / JCM 1290 / NCIMB 6125 / NCTC 8237 / Type A)</name>
    <dbReference type="NCBI Taxonomy" id="195103"/>
    <lineage>
        <taxon>Bacteria</taxon>
        <taxon>Bacillati</taxon>
        <taxon>Bacillota</taxon>
        <taxon>Clostridia</taxon>
        <taxon>Eubacteriales</taxon>
        <taxon>Clostridiaceae</taxon>
        <taxon>Clostridium</taxon>
    </lineage>
</organism>
<reference key="1">
    <citation type="journal article" date="2006" name="Genome Res.">
        <title>Skewed genomic variability in strains of the toxigenic bacterial pathogen, Clostridium perfringens.</title>
        <authorList>
            <person name="Myers G.S.A."/>
            <person name="Rasko D.A."/>
            <person name="Cheung J.K."/>
            <person name="Ravel J."/>
            <person name="Seshadri R."/>
            <person name="DeBoy R.T."/>
            <person name="Ren Q."/>
            <person name="Varga J."/>
            <person name="Awad M.M."/>
            <person name="Brinkac L.M."/>
            <person name="Daugherty S.C."/>
            <person name="Haft D.H."/>
            <person name="Dodson R.J."/>
            <person name="Madupu R."/>
            <person name="Nelson W.C."/>
            <person name="Rosovitz M.J."/>
            <person name="Sullivan S.A."/>
            <person name="Khouri H."/>
            <person name="Dimitrov G.I."/>
            <person name="Watkins K.L."/>
            <person name="Mulligan S."/>
            <person name="Benton J."/>
            <person name="Radune D."/>
            <person name="Fisher D.J."/>
            <person name="Atkins H.S."/>
            <person name="Hiscox T."/>
            <person name="Jost B.H."/>
            <person name="Billington S.J."/>
            <person name="Songer J.G."/>
            <person name="McClane B.A."/>
            <person name="Titball R.W."/>
            <person name="Rood J.I."/>
            <person name="Melville S.B."/>
            <person name="Paulsen I.T."/>
        </authorList>
    </citation>
    <scope>NUCLEOTIDE SEQUENCE [LARGE SCALE GENOMIC DNA]</scope>
    <source>
        <strain>ATCC 13124 / DSM 756 / JCM 1290 / NCIMB 6125 / NCTC 8237 / S 107 / Type A</strain>
    </source>
</reference>
<proteinExistence type="inferred from homology"/>
<evidence type="ECO:0000255" key="1">
    <source>
        <dbReference type="HAMAP-Rule" id="MF_01232"/>
    </source>
</evidence>
<evidence type="ECO:0000256" key="2">
    <source>
        <dbReference type="SAM" id="MobiDB-lite"/>
    </source>
</evidence>
<comment type="similarity">
    <text evidence="1">Belongs to the UPF0229 family.</text>
</comment>
<accession>Q0TQV7</accession>
<dbReference type="EMBL" id="CP000246">
    <property type="protein sequence ID" value="ABG83283.1"/>
    <property type="molecule type" value="Genomic_DNA"/>
</dbReference>
<dbReference type="SMR" id="Q0TQV7"/>
<dbReference type="STRING" id="195103.CPF_1540"/>
<dbReference type="PaxDb" id="195103-CPF_1540"/>
<dbReference type="KEGG" id="cpf:CPF_1540"/>
<dbReference type="eggNOG" id="COG2718">
    <property type="taxonomic scope" value="Bacteria"/>
</dbReference>
<dbReference type="HOGENOM" id="CLU_049702_2_0_9"/>
<dbReference type="Proteomes" id="UP000001823">
    <property type="component" value="Chromosome"/>
</dbReference>
<dbReference type="CDD" id="cd00198">
    <property type="entry name" value="vWFA"/>
    <property type="match status" value="1"/>
</dbReference>
<dbReference type="Gene3D" id="3.40.50.410">
    <property type="entry name" value="von Willebrand factor, type A domain"/>
    <property type="match status" value="1"/>
</dbReference>
<dbReference type="HAMAP" id="MF_01232">
    <property type="entry name" value="UPF0229"/>
    <property type="match status" value="1"/>
</dbReference>
<dbReference type="InterPro" id="IPR014230">
    <property type="entry name" value="Spore_YhbH"/>
</dbReference>
<dbReference type="InterPro" id="IPR006698">
    <property type="entry name" value="UPF0229"/>
</dbReference>
<dbReference type="InterPro" id="IPR036465">
    <property type="entry name" value="vWFA_dom_sf"/>
</dbReference>
<dbReference type="NCBIfam" id="TIGR02877">
    <property type="entry name" value="spore_yhbH"/>
    <property type="match status" value="1"/>
</dbReference>
<dbReference type="PANTHER" id="PTHR30510">
    <property type="entry name" value="UPF0229 PROTEIN YEAH"/>
    <property type="match status" value="1"/>
</dbReference>
<dbReference type="PANTHER" id="PTHR30510:SF2">
    <property type="entry name" value="UPF0229 PROTEIN YEAH"/>
    <property type="match status" value="1"/>
</dbReference>
<dbReference type="Pfam" id="PF04285">
    <property type="entry name" value="DUF444"/>
    <property type="match status" value="2"/>
</dbReference>
<dbReference type="SUPFAM" id="SSF53300">
    <property type="entry name" value="vWA-like"/>
    <property type="match status" value="1"/>
</dbReference>
<gene>
    <name type="ordered locus">CPF_1540</name>
</gene>